<keyword id="KW-0687">Ribonucleoprotein</keyword>
<keyword id="KW-0689">Ribosomal protein</keyword>
<keyword id="KW-0694">RNA-binding</keyword>
<keyword id="KW-0699">rRNA-binding</keyword>
<gene>
    <name evidence="1" type="primary">rplJ</name>
    <name type="ordered locus">RMA_0187</name>
</gene>
<proteinExistence type="inferred from homology"/>
<accession>A8F0P5</accession>
<reference key="1">
    <citation type="journal article" date="2007" name="Genome Res.">
        <title>Lateral gene transfer between obligate intracellular bacteria: evidence from the Rickettsia massiliae genome.</title>
        <authorList>
            <person name="Blanc G."/>
            <person name="Ogata H."/>
            <person name="Robert C."/>
            <person name="Audic S."/>
            <person name="Claverie J.-M."/>
            <person name="Raoult D."/>
        </authorList>
    </citation>
    <scope>NUCLEOTIDE SEQUENCE [LARGE SCALE GENOMIC DNA]</scope>
    <source>
        <strain>Mtu5</strain>
    </source>
</reference>
<comment type="function">
    <text evidence="1">Forms part of the ribosomal stalk, playing a central role in the interaction of the ribosome with GTP-bound translation factors.</text>
</comment>
<comment type="subunit">
    <text evidence="1">Part of the ribosomal stalk of the 50S ribosomal subunit. The N-terminus interacts with L11 and the large rRNA to form the base of the stalk. The C-terminus forms an elongated spine to which L12 dimers bind in a sequential fashion forming a multimeric L10(L12)X complex.</text>
</comment>
<comment type="similarity">
    <text evidence="1">Belongs to the universal ribosomal protein uL10 family.</text>
</comment>
<evidence type="ECO:0000255" key="1">
    <source>
        <dbReference type="HAMAP-Rule" id="MF_00362"/>
    </source>
</evidence>
<evidence type="ECO:0000305" key="2"/>
<name>RL10_RICM5</name>
<dbReference type="EMBL" id="CP000683">
    <property type="protein sequence ID" value="ABV84481.1"/>
    <property type="molecule type" value="Genomic_DNA"/>
</dbReference>
<dbReference type="RefSeq" id="WP_012152459.1">
    <property type="nucleotide sequence ID" value="NC_009900.1"/>
</dbReference>
<dbReference type="SMR" id="A8F0P5"/>
<dbReference type="KEGG" id="rms:RMA_0187"/>
<dbReference type="HOGENOM" id="CLU_092227_0_0_5"/>
<dbReference type="Proteomes" id="UP000001311">
    <property type="component" value="Chromosome"/>
</dbReference>
<dbReference type="GO" id="GO:0015934">
    <property type="term" value="C:large ribosomal subunit"/>
    <property type="evidence" value="ECO:0007669"/>
    <property type="project" value="InterPro"/>
</dbReference>
<dbReference type="GO" id="GO:0070180">
    <property type="term" value="F:large ribosomal subunit rRNA binding"/>
    <property type="evidence" value="ECO:0007669"/>
    <property type="project" value="UniProtKB-UniRule"/>
</dbReference>
<dbReference type="GO" id="GO:0003735">
    <property type="term" value="F:structural constituent of ribosome"/>
    <property type="evidence" value="ECO:0007669"/>
    <property type="project" value="InterPro"/>
</dbReference>
<dbReference type="GO" id="GO:0006412">
    <property type="term" value="P:translation"/>
    <property type="evidence" value="ECO:0007669"/>
    <property type="project" value="UniProtKB-UniRule"/>
</dbReference>
<dbReference type="CDD" id="cd05797">
    <property type="entry name" value="Ribosomal_L10"/>
    <property type="match status" value="1"/>
</dbReference>
<dbReference type="Gene3D" id="3.30.70.1730">
    <property type="match status" value="1"/>
</dbReference>
<dbReference type="Gene3D" id="6.10.250.290">
    <property type="match status" value="1"/>
</dbReference>
<dbReference type="HAMAP" id="MF_00362">
    <property type="entry name" value="Ribosomal_uL10"/>
    <property type="match status" value="1"/>
</dbReference>
<dbReference type="InterPro" id="IPR001790">
    <property type="entry name" value="Ribosomal_uL10"/>
</dbReference>
<dbReference type="InterPro" id="IPR043141">
    <property type="entry name" value="Ribosomal_uL10-like_sf"/>
</dbReference>
<dbReference type="InterPro" id="IPR022973">
    <property type="entry name" value="Ribosomal_uL10_bac"/>
</dbReference>
<dbReference type="InterPro" id="IPR047865">
    <property type="entry name" value="Ribosomal_uL10_bac_type"/>
</dbReference>
<dbReference type="InterPro" id="IPR002363">
    <property type="entry name" value="Ribosomal_uL10_CS_bac"/>
</dbReference>
<dbReference type="NCBIfam" id="NF000955">
    <property type="entry name" value="PRK00099.1-1"/>
    <property type="match status" value="1"/>
</dbReference>
<dbReference type="PANTHER" id="PTHR11560">
    <property type="entry name" value="39S RIBOSOMAL PROTEIN L10, MITOCHONDRIAL"/>
    <property type="match status" value="1"/>
</dbReference>
<dbReference type="Pfam" id="PF00466">
    <property type="entry name" value="Ribosomal_L10"/>
    <property type="match status" value="1"/>
</dbReference>
<dbReference type="SUPFAM" id="SSF160369">
    <property type="entry name" value="Ribosomal protein L10-like"/>
    <property type="match status" value="1"/>
</dbReference>
<dbReference type="PROSITE" id="PS01109">
    <property type="entry name" value="RIBOSOMAL_L10"/>
    <property type="match status" value="1"/>
</dbReference>
<feature type="chain" id="PRO_1000059891" description="Large ribosomal subunit protein uL10">
    <location>
        <begin position="1"/>
        <end position="169"/>
    </location>
</feature>
<protein>
    <recommendedName>
        <fullName evidence="1">Large ribosomal subunit protein uL10</fullName>
    </recommendedName>
    <alternativeName>
        <fullName evidence="2">50S ribosomal protein L10</fullName>
    </alternativeName>
</protein>
<sequence length="169" mass="18117">MLRSEKPVAVEDIVNIYKESPSIIITHYHGLTVSQVSSLRESLKSKEAGFKVVKNTLAKIAANQTGLDSIANLFAGPTAIVYSKEPVEMAKLVVNFAKANDNLKIIGGIVDNHVLDEHSIKELSKLPALNELRGKIVGLLQAPATKVVGVLQAPSSSMARVIQAHASKN</sequence>
<organism>
    <name type="scientific">Rickettsia massiliae (strain Mtu5)</name>
    <dbReference type="NCBI Taxonomy" id="416276"/>
    <lineage>
        <taxon>Bacteria</taxon>
        <taxon>Pseudomonadati</taxon>
        <taxon>Pseudomonadota</taxon>
        <taxon>Alphaproteobacteria</taxon>
        <taxon>Rickettsiales</taxon>
        <taxon>Rickettsiaceae</taxon>
        <taxon>Rickettsieae</taxon>
        <taxon>Rickettsia</taxon>
        <taxon>spotted fever group</taxon>
    </lineage>
</organism>